<organism>
    <name type="scientific">Pongo abelii</name>
    <name type="common">Sumatran orangutan</name>
    <name type="synonym">Pongo pygmaeus abelii</name>
    <dbReference type="NCBI Taxonomy" id="9601"/>
    <lineage>
        <taxon>Eukaryota</taxon>
        <taxon>Metazoa</taxon>
        <taxon>Chordata</taxon>
        <taxon>Craniata</taxon>
        <taxon>Vertebrata</taxon>
        <taxon>Euteleostomi</taxon>
        <taxon>Mammalia</taxon>
        <taxon>Eutheria</taxon>
        <taxon>Euarchontoglires</taxon>
        <taxon>Primates</taxon>
        <taxon>Haplorrhini</taxon>
        <taxon>Catarrhini</taxon>
        <taxon>Hominidae</taxon>
        <taxon>Pongo</taxon>
    </lineage>
</organism>
<protein>
    <recommendedName>
        <fullName>E3 ubiquitin-protein ligase NEDD4-like</fullName>
        <ecNumber evidence="2">2.3.2.26</ecNumber>
    </recommendedName>
    <alternativeName>
        <fullName>HECT-type E3 ubiquitin transferase NED4L</fullName>
    </alternativeName>
</protein>
<evidence type="ECO:0000250" key="1"/>
<evidence type="ECO:0000250" key="2">
    <source>
        <dbReference type="UniProtKB" id="P46934"/>
    </source>
</evidence>
<evidence type="ECO:0000250" key="3">
    <source>
        <dbReference type="UniProtKB" id="Q8CFI0"/>
    </source>
</evidence>
<evidence type="ECO:0000250" key="4">
    <source>
        <dbReference type="UniProtKB" id="Q96PU5"/>
    </source>
</evidence>
<evidence type="ECO:0000255" key="5">
    <source>
        <dbReference type="PROSITE-ProRule" id="PRU00041"/>
    </source>
</evidence>
<evidence type="ECO:0000255" key="6">
    <source>
        <dbReference type="PROSITE-ProRule" id="PRU00104"/>
    </source>
</evidence>
<evidence type="ECO:0000255" key="7">
    <source>
        <dbReference type="PROSITE-ProRule" id="PRU00224"/>
    </source>
</evidence>
<evidence type="ECO:0000256" key="8">
    <source>
        <dbReference type="SAM" id="MobiDB-lite"/>
    </source>
</evidence>
<reference key="1">
    <citation type="submission" date="2004-11" db="EMBL/GenBank/DDBJ databases">
        <authorList>
            <consortium name="The German cDNA consortium"/>
        </authorList>
    </citation>
    <scope>NUCLEOTIDE SEQUENCE [LARGE SCALE MRNA]</scope>
    <source>
        <tissue>Brain cortex</tissue>
    </source>
</reference>
<gene>
    <name type="primary">NEDD4L</name>
</gene>
<dbReference type="EC" id="2.3.2.26" evidence="2"/>
<dbReference type="EMBL" id="CR858697">
    <property type="protein sequence ID" value="CAH90908.1"/>
    <property type="molecule type" value="mRNA"/>
</dbReference>
<dbReference type="RefSeq" id="NP_001125518.1">
    <property type="nucleotide sequence ID" value="NM_001132046.1"/>
</dbReference>
<dbReference type="BMRB" id="Q5RBF2"/>
<dbReference type="SMR" id="Q5RBF2"/>
<dbReference type="STRING" id="9601.ENSPPYP00000010317"/>
<dbReference type="GeneID" id="100172429"/>
<dbReference type="KEGG" id="pon:100172429"/>
<dbReference type="CTD" id="23327"/>
<dbReference type="eggNOG" id="KOG0940">
    <property type="taxonomic scope" value="Eukaryota"/>
</dbReference>
<dbReference type="InParanoid" id="Q5RBF2"/>
<dbReference type="OrthoDB" id="423283at2759"/>
<dbReference type="UniPathway" id="UPA00143"/>
<dbReference type="Proteomes" id="UP000001595">
    <property type="component" value="Unplaced"/>
</dbReference>
<dbReference type="GO" id="GO:0005794">
    <property type="term" value="C:Golgi apparatus"/>
    <property type="evidence" value="ECO:0007669"/>
    <property type="project" value="UniProtKB-SubCell"/>
</dbReference>
<dbReference type="GO" id="GO:0005771">
    <property type="term" value="C:multivesicular body"/>
    <property type="evidence" value="ECO:0007669"/>
    <property type="project" value="UniProtKB-SubCell"/>
</dbReference>
<dbReference type="GO" id="GO:0019871">
    <property type="term" value="F:sodium channel inhibitor activity"/>
    <property type="evidence" value="ECO:0007669"/>
    <property type="project" value="TreeGrafter"/>
</dbReference>
<dbReference type="GO" id="GO:0061630">
    <property type="term" value="F:ubiquitin protein ligase activity"/>
    <property type="evidence" value="ECO:0007669"/>
    <property type="project" value="InterPro"/>
</dbReference>
<dbReference type="GO" id="GO:0030154">
    <property type="term" value="P:cell differentiation"/>
    <property type="evidence" value="ECO:0007669"/>
    <property type="project" value="UniProtKB-KW"/>
</dbReference>
<dbReference type="GO" id="GO:0007528">
    <property type="term" value="P:neuromuscular junction development"/>
    <property type="evidence" value="ECO:0007669"/>
    <property type="project" value="TreeGrafter"/>
</dbReference>
<dbReference type="GO" id="GO:0016567">
    <property type="term" value="P:protein ubiquitination"/>
    <property type="evidence" value="ECO:0000250"/>
    <property type="project" value="UniProtKB"/>
</dbReference>
<dbReference type="GO" id="GO:0032801">
    <property type="term" value="P:receptor catabolic process"/>
    <property type="evidence" value="ECO:0007669"/>
    <property type="project" value="TreeGrafter"/>
</dbReference>
<dbReference type="GO" id="GO:0031623">
    <property type="term" value="P:receptor internalization"/>
    <property type="evidence" value="ECO:0007669"/>
    <property type="project" value="TreeGrafter"/>
</dbReference>
<dbReference type="GO" id="GO:0048814">
    <property type="term" value="P:regulation of dendrite morphogenesis"/>
    <property type="evidence" value="ECO:0007669"/>
    <property type="project" value="TreeGrafter"/>
</dbReference>
<dbReference type="GO" id="GO:1902305">
    <property type="term" value="P:regulation of sodium ion transmembrane transport"/>
    <property type="evidence" value="ECO:0000250"/>
    <property type="project" value="UniProtKB"/>
</dbReference>
<dbReference type="GO" id="GO:0006511">
    <property type="term" value="P:ubiquitin-dependent protein catabolic process"/>
    <property type="evidence" value="ECO:0007669"/>
    <property type="project" value="InterPro"/>
</dbReference>
<dbReference type="CDD" id="cd04033">
    <property type="entry name" value="C2_NEDD4_NEDD4L"/>
    <property type="match status" value="1"/>
</dbReference>
<dbReference type="CDD" id="cd00078">
    <property type="entry name" value="HECTc"/>
    <property type="match status" value="1"/>
</dbReference>
<dbReference type="CDD" id="cd00201">
    <property type="entry name" value="WW"/>
    <property type="match status" value="4"/>
</dbReference>
<dbReference type="FunFam" id="2.20.70.10:FF:000017">
    <property type="entry name" value="E3 ubiquitin-protein ligase"/>
    <property type="match status" value="1"/>
</dbReference>
<dbReference type="FunFam" id="3.90.1750.10:FF:000026">
    <property type="entry name" value="E3 ubiquitin-protein ligase HACE1"/>
    <property type="match status" value="1"/>
</dbReference>
<dbReference type="FunFam" id="3.30.2160.10:FF:000001">
    <property type="entry name" value="E3 ubiquitin-protein ligase NEDD4-like"/>
    <property type="match status" value="1"/>
</dbReference>
<dbReference type="FunFam" id="3.30.2410.10:FF:000001">
    <property type="entry name" value="E3 ubiquitin-protein ligase NEDD4-like"/>
    <property type="match status" value="1"/>
</dbReference>
<dbReference type="FunFam" id="3.90.1750.10:FF:000001">
    <property type="entry name" value="E3 ubiquitin-protein ligase NEDD4-like"/>
    <property type="match status" value="1"/>
</dbReference>
<dbReference type="FunFam" id="2.20.70.10:FF:000006">
    <property type="entry name" value="E3 ubiquitin-protein ligase NEDD4-like protein"/>
    <property type="match status" value="1"/>
</dbReference>
<dbReference type="FunFam" id="2.20.70.10:FF:000008">
    <property type="entry name" value="E3 ubiquitin-protein ligase NEDD4-like protein"/>
    <property type="match status" value="1"/>
</dbReference>
<dbReference type="FunFam" id="2.20.70.10:FF:000025">
    <property type="entry name" value="E3 ubiquitin-protein ligase NEDD4-like protein"/>
    <property type="match status" value="1"/>
</dbReference>
<dbReference type="FunFam" id="2.60.40.150:FF:000047">
    <property type="entry name" value="Putative E3 ubiquitin-protein ligase NEDD4-like"/>
    <property type="match status" value="1"/>
</dbReference>
<dbReference type="Gene3D" id="2.20.70.10">
    <property type="match status" value="3"/>
</dbReference>
<dbReference type="Gene3D" id="2.60.40.150">
    <property type="entry name" value="C2 domain"/>
    <property type="match status" value="1"/>
</dbReference>
<dbReference type="Gene3D" id="3.30.2160.10">
    <property type="entry name" value="Hect, E3 ligase catalytic domain"/>
    <property type="match status" value="1"/>
</dbReference>
<dbReference type="Gene3D" id="3.30.2410.10">
    <property type="entry name" value="Hect, E3 ligase catalytic domain"/>
    <property type="match status" value="1"/>
</dbReference>
<dbReference type="Gene3D" id="3.90.1750.10">
    <property type="entry name" value="Hect, E3 ligase catalytic domains"/>
    <property type="match status" value="1"/>
</dbReference>
<dbReference type="InterPro" id="IPR000008">
    <property type="entry name" value="C2_dom"/>
</dbReference>
<dbReference type="InterPro" id="IPR035892">
    <property type="entry name" value="C2_domain_sf"/>
</dbReference>
<dbReference type="InterPro" id="IPR024928">
    <property type="entry name" value="E3_ub_ligase_SMURF1"/>
</dbReference>
<dbReference type="InterPro" id="IPR050409">
    <property type="entry name" value="E3_ubiq-protein_ligase"/>
</dbReference>
<dbReference type="InterPro" id="IPR000569">
    <property type="entry name" value="HECT_dom"/>
</dbReference>
<dbReference type="InterPro" id="IPR035983">
    <property type="entry name" value="Hect_E3_ubiquitin_ligase"/>
</dbReference>
<dbReference type="InterPro" id="IPR001202">
    <property type="entry name" value="WW_dom"/>
</dbReference>
<dbReference type="InterPro" id="IPR036020">
    <property type="entry name" value="WW_dom_sf"/>
</dbReference>
<dbReference type="PANTHER" id="PTHR11254:SF443">
    <property type="entry name" value="E3 UBIQUITIN-PROTEIN LIGASE NEDD4-LIKE"/>
    <property type="match status" value="1"/>
</dbReference>
<dbReference type="PANTHER" id="PTHR11254">
    <property type="entry name" value="HECT DOMAIN UBIQUITIN-PROTEIN LIGASE"/>
    <property type="match status" value="1"/>
</dbReference>
<dbReference type="Pfam" id="PF00168">
    <property type="entry name" value="C2"/>
    <property type="match status" value="1"/>
</dbReference>
<dbReference type="Pfam" id="PF00632">
    <property type="entry name" value="HECT"/>
    <property type="match status" value="1"/>
</dbReference>
<dbReference type="Pfam" id="PF00397">
    <property type="entry name" value="WW"/>
    <property type="match status" value="4"/>
</dbReference>
<dbReference type="PIRSF" id="PIRSF001569">
    <property type="entry name" value="E3_ub_ligase_SMURF1"/>
    <property type="match status" value="1"/>
</dbReference>
<dbReference type="PRINTS" id="PR00360">
    <property type="entry name" value="C2DOMAIN"/>
</dbReference>
<dbReference type="SMART" id="SM00239">
    <property type="entry name" value="C2"/>
    <property type="match status" value="1"/>
</dbReference>
<dbReference type="SMART" id="SM00119">
    <property type="entry name" value="HECTc"/>
    <property type="match status" value="1"/>
</dbReference>
<dbReference type="SMART" id="SM00456">
    <property type="entry name" value="WW"/>
    <property type="match status" value="4"/>
</dbReference>
<dbReference type="SUPFAM" id="SSF49562">
    <property type="entry name" value="C2 domain (Calcium/lipid-binding domain, CaLB)"/>
    <property type="match status" value="1"/>
</dbReference>
<dbReference type="SUPFAM" id="SSF56204">
    <property type="entry name" value="Hect, E3 ligase catalytic domain"/>
    <property type="match status" value="1"/>
</dbReference>
<dbReference type="SUPFAM" id="SSF51045">
    <property type="entry name" value="WW domain"/>
    <property type="match status" value="4"/>
</dbReference>
<dbReference type="PROSITE" id="PS50004">
    <property type="entry name" value="C2"/>
    <property type="match status" value="1"/>
</dbReference>
<dbReference type="PROSITE" id="PS50237">
    <property type="entry name" value="HECT"/>
    <property type="match status" value="1"/>
</dbReference>
<dbReference type="PROSITE" id="PS01159">
    <property type="entry name" value="WW_DOMAIN_1"/>
    <property type="match status" value="4"/>
</dbReference>
<dbReference type="PROSITE" id="PS50020">
    <property type="entry name" value="WW_DOMAIN_2"/>
    <property type="match status" value="4"/>
</dbReference>
<sequence>MAPLSAALLPWHGVCVPVCYGESRILRVKVVSGIDLAKKDIFGASDPYVKLSLYVADENRELALVQTKTIKKTLNPKWNEEFYFRVNPSNHRLLFEVFDENRLTRDDFLGQVDVPLSHLPTEDPTMERPYTFKDFLLRPRSHKSRVKGFLRLKMAYMPKNGGQEEENSEQRDDMEHGWEVVDSNDSASQHQEELPPPPLPPGWEEKVDNLGRTYYVNHNNRTTQWHRPSLMDVSSESDNNIRQINQEAAHRRFRSRRHISEDLEPEPSEGGDVPEPWETISEEVNIAGDSLGLALPPPPASPGSRTSPQELSEELSRRLQITPDSNGEQFSSLIQREPSSRLRSCSVTDAVAEQGHLPPPSVAYVHTTPGLPSGWEERKDAKGRTYYVNHNNRTTTWTRPIMQLAEDGASGSATNSNNHLIEPQIRRPRSLSSPTVTLSAPLEGAKDSPVRRAVKDTLSNPQSPQPSPYNSPKPQHKVTQSFLPPGWEMRIAPNGRPFFIDHNTKTTTWEDPRLKFPVHMRSKTSLNPNDLGPLPPGWEERIHLDGRTFYIDHNSKITQWEDPRLQNPAITGPAVPYSREFKQKYDYFRKKLKKPADIPNRFEMKLHRNNIFEESYRRIMSVKRPDVLKARLWIEFESEKGLDYGGVAREWFFLLSKEMFNPYYGLFEYSATDNYTLQINPNSGLCNEDHLSYFTFIGRVAGLAVFHGKLLDGFFIRPFYKMMLGKQITLNDMESVDSEYYNSLKWILENDPTELDLMFCIDEENFGQTYQVDLEPNGSEIMVTNENKREYIDLVIQWRFVNRVQKQMNAFLEGFTELLPIDLIKIFDENELELLMCGLGDVDVNDWRQHSIYKNGYCPNHPVIQWFWKAVLLMDAEKRIRLLQFVTGTSRVPMNGFAELYGSNGPQLFTIEQWGSPEKLPRAHTCFNRLDLPPYETFEDLREKLLMAVENAQGFEGVD</sequence>
<proteinExistence type="evidence at transcript level"/>
<keyword id="KW-0963">Cytoplasm</keyword>
<keyword id="KW-0221">Differentiation</keyword>
<keyword id="KW-0967">Endosome</keyword>
<keyword id="KW-0333">Golgi apparatus</keyword>
<keyword id="KW-0597">Phosphoprotein</keyword>
<keyword id="KW-1185">Reference proteome</keyword>
<keyword id="KW-0677">Repeat</keyword>
<keyword id="KW-0808">Transferase</keyword>
<keyword id="KW-0832">Ubl conjugation</keyword>
<keyword id="KW-0833">Ubl conjugation pathway</keyword>
<feature type="chain" id="PRO_0000120325" description="E3 ubiquitin-protein ligase NEDD4-like">
    <location>
        <begin position="1"/>
        <end position="959"/>
    </location>
</feature>
<feature type="domain" description="C2" evidence="5">
    <location>
        <begin position="10"/>
        <end position="130"/>
    </location>
</feature>
<feature type="domain" description="WW 1" evidence="7">
    <location>
        <begin position="197"/>
        <end position="230"/>
    </location>
</feature>
<feature type="domain" description="WW 2" evidence="7">
    <location>
        <begin position="369"/>
        <end position="402"/>
    </location>
</feature>
<feature type="domain" description="WW 3" evidence="7">
    <location>
        <begin position="481"/>
        <end position="514"/>
    </location>
</feature>
<feature type="domain" description="WW 4" evidence="7">
    <location>
        <begin position="532"/>
        <end position="565"/>
    </location>
</feature>
<feature type="domain" description="HECT" evidence="6">
    <location>
        <begin position="624"/>
        <end position="958"/>
    </location>
</feature>
<feature type="region of interest" description="Disordered" evidence="8">
    <location>
        <begin position="183"/>
        <end position="206"/>
    </location>
</feature>
<feature type="region of interest" description="Disordered" evidence="8">
    <location>
        <begin position="248"/>
        <end position="275"/>
    </location>
</feature>
<feature type="region of interest" description="Disordered" evidence="8">
    <location>
        <begin position="289"/>
        <end position="316"/>
    </location>
</feature>
<feature type="region of interest" description="Disordered" evidence="8">
    <location>
        <begin position="408"/>
        <end position="478"/>
    </location>
</feature>
<feature type="compositionally biased region" description="Basic and acidic residues" evidence="8">
    <location>
        <begin position="444"/>
        <end position="455"/>
    </location>
</feature>
<feature type="active site" description="Glycyl thioester intermediate" evidence="6">
    <location>
        <position position="926"/>
    </location>
</feature>
<feature type="modified residue" description="Phosphoserine" evidence="4">
    <location>
        <position position="316"/>
    </location>
</feature>
<feature type="modified residue" description="Phosphothreonine" evidence="4">
    <location>
        <position position="322"/>
    </location>
</feature>
<feature type="modified residue" description="Phosphoserine; by WNK1 and WNK4" evidence="4">
    <location>
        <position position="346"/>
    </location>
</feature>
<feature type="modified residue" description="Phosphoserine" evidence="4">
    <location>
        <position position="430"/>
    </location>
</feature>
<feature type="modified residue" description="Phosphoserine; by SGK1" evidence="4">
    <location>
        <position position="432"/>
    </location>
</feature>
<feature type="modified residue" description="Phosphoserine; by WNK1 and WNK4" evidence="4">
    <location>
        <position position="433"/>
    </location>
</feature>
<feature type="modified residue" description="Phosphoserine; by SGK1" evidence="4">
    <location>
        <position position="448"/>
    </location>
</feature>
<feature type="modified residue" description="Phosphoserine" evidence="4">
    <location>
        <position position="459"/>
    </location>
</feature>
<feature type="modified residue" description="Phosphoserine" evidence="4">
    <location>
        <position position="463"/>
    </location>
</feature>
<feature type="modified residue" description="Phosphoserine" evidence="4">
    <location>
        <position position="467"/>
    </location>
</feature>
<feature type="modified residue" description="Phosphoserine" evidence="4">
    <location>
        <position position="471"/>
    </location>
</feature>
<comment type="function">
    <text evidence="3 4">E3 ubiquitin-protein ligase which accepts ubiquitin from an E2 ubiquitin-conjugating enzyme in the form of a thioester and then directly transfers the ubiquitin to targeted substrates. Inhibits TGF-beta signaling by triggering SMAD2 and TGFBR1 ubiquitination and proteasome-dependent degradation. Promotes ubiquitination and internalization of various plasma membrane channels such as ENaC, Nav1.2, Nav1.3, Nav1.5, Nav1.7, Nav1.8, Kv1.3, KCNH2, EAAT1 or CLC5. Promotes ubiquitination and degradation of SGK1 and TNK2. Ubiquitinates BRAT1 and this ubiquitination is enhanced in the presence of NDFIP1. Plays a role in dendrite formation by melanocytes (By similarity). Involved in the regulation of TOR signaling (By similarity). Ubiquitinates TTYH2 and TTYH3 and regulates protein levels of TTYH2 (By similarity).</text>
</comment>
<comment type="catalytic activity">
    <reaction evidence="2">
        <text>S-ubiquitinyl-[E2 ubiquitin-conjugating enzyme]-L-cysteine + [acceptor protein]-L-lysine = [E2 ubiquitin-conjugating enzyme]-L-cysteine + N(6)-ubiquitinyl-[acceptor protein]-L-lysine.</text>
        <dbReference type="EC" id="2.3.2.26"/>
    </reaction>
</comment>
<comment type="activity regulation">
    <text evidence="4">Activated by NDFIP1- and NDFIP2-binding.</text>
</comment>
<comment type="pathway">
    <text>Protein modification; protein ubiquitination.</text>
</comment>
<comment type="subunit">
    <text evidence="3 4">Interacts with UBE2E3 (By similarity). Interacts with NDFIP1; this interaction activates the E3 ubiquitin-protein ligase (By similarity). Interacts with NDFIP2; this interaction activates the E3 ubiquitin-protein ligase (By similarity). Interacts (via WW domains) with SCN1A (By similarity). Interacts (via WW domains) with SCN2A (By similarity). Interacts (via WW domains) with SCN3A (By similarity). Interacts (via WW domains) with SCN5A (By similarity). Interacts (via WW domains) with SCN8A (By similarity). Interacts (via WW domains) with SCN9A (By similarity). Interacts (via WW domains) with SCN10A (By similarity). Interacts (via WW domains) with CLCN5 (By similarity). Interacts with SMAD2 (By similarity). Interacts with SMAD3 (By similarity). Interacts with SMAD6 (By similarity). Interacts with SMAD7 (By similarity). The phosphorylated form interacts with 14-3-3 proteins (By similarity). Interacts with TNK2 (By similarity). Interacts with WNK1 (By similarity). Interacts with SGK1 (By similarity). Interacts (via C2 domain) with NPC2 (By similarity). Interacts with ARRDC4 (By similarity). Interacts with KCNQ1; promotes internalization of KCNQ1 (By similarity). Interacts (via domains WW1, 3 and 4) with USP36; the interaction inhibits ubiquitination of, at least, NTRK1, KCNQ2 and KCNQ3 by NEDD4L (By similarity). Interacts with PRRG4 (via cytoplasmic domain) (By similarity). Interacts with LDLRAD3; the interaction is direct (By similarity). Interacts with TTYH2 and TTYH3 (By similarity).</text>
</comment>
<comment type="subcellular location">
    <subcellularLocation>
        <location evidence="4">Cytoplasm</location>
    </subcellularLocation>
    <subcellularLocation>
        <location evidence="4">Golgi apparatus</location>
    </subcellularLocation>
    <subcellularLocation>
        <location evidence="4">Endosome</location>
        <location evidence="4">Multivesicular body</location>
    </subcellularLocation>
</comment>
<comment type="domain">
    <text evidence="4">WW domains are involved in recognizing PPxY motifs in substrate proteins.</text>
</comment>
<comment type="PTM">
    <text evidence="1">Phosphorylated; which impairs interaction with SCNN. Interaction with YWHAH inhibits dephosphorylation (By similarity).</text>
</comment>
<comment type="PTM">
    <text evidence="4">Auto-ubiquitinated.</text>
</comment>
<accession>Q5RBF2</accession>
<name>NED4L_PONAB</name>